<name>AHPC_BUCAP</name>
<protein>
    <recommendedName>
        <fullName>Alkyl hydroperoxide reductase C</fullName>
        <ecNumber evidence="1">1.11.1.26</ecNumber>
    </recommendedName>
    <alternativeName>
        <fullName>Peroxiredoxin</fullName>
    </alternativeName>
    <alternativeName>
        <fullName>Thioredoxin peroxidase</fullName>
    </alternativeName>
</protein>
<dbReference type="EC" id="1.11.1.26" evidence="1"/>
<dbReference type="EMBL" id="AE013218">
    <property type="protein sequence ID" value="AAM67742.1"/>
    <property type="molecule type" value="Genomic_DNA"/>
</dbReference>
<dbReference type="RefSeq" id="WP_011053709.1">
    <property type="nucleotide sequence ID" value="NC_004061.1"/>
</dbReference>
<dbReference type="SMR" id="Q8K9W0"/>
<dbReference type="STRING" id="198804.BUsg_176"/>
<dbReference type="GeneID" id="93003644"/>
<dbReference type="KEGG" id="bas:BUsg_176"/>
<dbReference type="eggNOG" id="COG0450">
    <property type="taxonomic scope" value="Bacteria"/>
</dbReference>
<dbReference type="HOGENOM" id="CLU_042529_21_1_6"/>
<dbReference type="Proteomes" id="UP000000416">
    <property type="component" value="Chromosome"/>
</dbReference>
<dbReference type="GO" id="GO:0005829">
    <property type="term" value="C:cytosol"/>
    <property type="evidence" value="ECO:0007669"/>
    <property type="project" value="TreeGrafter"/>
</dbReference>
<dbReference type="GO" id="GO:0102039">
    <property type="term" value="F:NADH-dependent peroxiredoxin activity"/>
    <property type="evidence" value="ECO:0007669"/>
    <property type="project" value="UniProtKB-EC"/>
</dbReference>
<dbReference type="GO" id="GO:0008379">
    <property type="term" value="F:thioredoxin peroxidase activity"/>
    <property type="evidence" value="ECO:0007669"/>
    <property type="project" value="TreeGrafter"/>
</dbReference>
<dbReference type="GO" id="GO:0045454">
    <property type="term" value="P:cell redox homeostasis"/>
    <property type="evidence" value="ECO:0007669"/>
    <property type="project" value="TreeGrafter"/>
</dbReference>
<dbReference type="GO" id="GO:0033554">
    <property type="term" value="P:cellular response to stress"/>
    <property type="evidence" value="ECO:0007669"/>
    <property type="project" value="TreeGrafter"/>
</dbReference>
<dbReference type="GO" id="GO:0042744">
    <property type="term" value="P:hydrogen peroxide catabolic process"/>
    <property type="evidence" value="ECO:0007669"/>
    <property type="project" value="TreeGrafter"/>
</dbReference>
<dbReference type="GO" id="GO:0006979">
    <property type="term" value="P:response to oxidative stress"/>
    <property type="evidence" value="ECO:0007669"/>
    <property type="project" value="TreeGrafter"/>
</dbReference>
<dbReference type="CDD" id="cd03015">
    <property type="entry name" value="PRX_Typ2cys"/>
    <property type="match status" value="1"/>
</dbReference>
<dbReference type="FunFam" id="3.40.30.10:FF:000002">
    <property type="entry name" value="Alkyl hydroperoxide reductase C"/>
    <property type="match status" value="1"/>
</dbReference>
<dbReference type="Gene3D" id="3.40.30.10">
    <property type="entry name" value="Glutaredoxin"/>
    <property type="match status" value="1"/>
</dbReference>
<dbReference type="InterPro" id="IPR000866">
    <property type="entry name" value="AhpC/TSA"/>
</dbReference>
<dbReference type="InterPro" id="IPR050217">
    <property type="entry name" value="Peroxiredoxin"/>
</dbReference>
<dbReference type="InterPro" id="IPR024706">
    <property type="entry name" value="Peroxiredoxin_AhpC-typ"/>
</dbReference>
<dbReference type="InterPro" id="IPR019479">
    <property type="entry name" value="Peroxiredoxin_C"/>
</dbReference>
<dbReference type="InterPro" id="IPR036249">
    <property type="entry name" value="Thioredoxin-like_sf"/>
</dbReference>
<dbReference type="InterPro" id="IPR013766">
    <property type="entry name" value="Thioredoxin_domain"/>
</dbReference>
<dbReference type="NCBIfam" id="NF011576">
    <property type="entry name" value="PRK15000.1"/>
    <property type="match status" value="1"/>
</dbReference>
<dbReference type="PANTHER" id="PTHR10681">
    <property type="entry name" value="THIOREDOXIN PEROXIDASE"/>
    <property type="match status" value="1"/>
</dbReference>
<dbReference type="PANTHER" id="PTHR10681:SF128">
    <property type="entry name" value="THIOREDOXIN-DEPENDENT PEROXIDE REDUCTASE, MITOCHONDRIAL"/>
    <property type="match status" value="1"/>
</dbReference>
<dbReference type="Pfam" id="PF10417">
    <property type="entry name" value="1-cysPrx_C"/>
    <property type="match status" value="1"/>
</dbReference>
<dbReference type="Pfam" id="PF00578">
    <property type="entry name" value="AhpC-TSA"/>
    <property type="match status" value="1"/>
</dbReference>
<dbReference type="PIRSF" id="PIRSF000239">
    <property type="entry name" value="AHPC"/>
    <property type="match status" value="1"/>
</dbReference>
<dbReference type="SUPFAM" id="SSF52833">
    <property type="entry name" value="Thioredoxin-like"/>
    <property type="match status" value="1"/>
</dbReference>
<dbReference type="PROSITE" id="PS51352">
    <property type="entry name" value="THIOREDOXIN_2"/>
    <property type="match status" value="1"/>
</dbReference>
<gene>
    <name type="ordered locus">BUsg_176</name>
</gene>
<reference key="1">
    <citation type="journal article" date="2002" name="Science">
        <title>50 million years of genomic stasis in endosymbiotic bacteria.</title>
        <authorList>
            <person name="Tamas I."/>
            <person name="Klasson L."/>
            <person name="Canbaeck B."/>
            <person name="Naeslund A.K."/>
            <person name="Eriksson A.-S."/>
            <person name="Wernegreen J.J."/>
            <person name="Sandstroem J.P."/>
            <person name="Moran N.A."/>
            <person name="Andersson S.G.E."/>
        </authorList>
    </citation>
    <scope>NUCLEOTIDE SEQUENCE [LARGE SCALE GENOMIC DNA]</scope>
    <source>
        <strain>Sg</strain>
    </source>
</reference>
<organism>
    <name type="scientific">Buchnera aphidicola subsp. Schizaphis graminum (strain Sg)</name>
    <dbReference type="NCBI Taxonomy" id="198804"/>
    <lineage>
        <taxon>Bacteria</taxon>
        <taxon>Pseudomonadati</taxon>
        <taxon>Pseudomonadota</taxon>
        <taxon>Gammaproteobacteria</taxon>
        <taxon>Enterobacterales</taxon>
        <taxon>Erwiniaceae</taxon>
        <taxon>Buchnera</taxon>
    </lineage>
</organism>
<accession>Q8K9W0</accession>
<feature type="chain" id="PRO_0000135142" description="Alkyl hydroperoxide reductase C">
    <location>
        <begin position="1"/>
        <end position="198"/>
    </location>
</feature>
<feature type="domain" description="Thioredoxin" evidence="4">
    <location>
        <begin position="2"/>
        <end position="163"/>
    </location>
</feature>
<feature type="active site" description="Cysteine sulfenic acid (-SOH) intermediate" evidence="1">
    <location>
        <position position="50"/>
    </location>
</feature>
<feature type="disulfide bond" description="Interchain (with C-171); in linked form" evidence="1">
    <location>
        <position position="50"/>
    </location>
</feature>
<feature type="disulfide bond" description="Interchain (with C-50); in linked form" evidence="1">
    <location>
        <position position="171"/>
    </location>
</feature>
<proteinExistence type="inferred from homology"/>
<sequence>MTLVTQKAPNFIAPAILKNGKIMNNFDLKKYSNGQITVLFFWPMDFTFVCPSEIIEFNKTFEAFEKRNVKIVGVSIDSVFVHQAWQNTFPENGGIGKIKFPMVSDIKHEIQKSYHIEHPELNIALRASFLIDENWIIRHQVVNDLPFGRNIDEMIRMIDALNFHNKYGEVCPVNWKHGQEGMKASQEGVSSYLKKYFS</sequence>
<keyword id="KW-0049">Antioxidant</keyword>
<keyword id="KW-0963">Cytoplasm</keyword>
<keyword id="KW-1015">Disulfide bond</keyword>
<keyword id="KW-0560">Oxidoreductase</keyword>
<keyword id="KW-0575">Peroxidase</keyword>
<keyword id="KW-0676">Redox-active center</keyword>
<evidence type="ECO:0000250" key="1">
    <source>
        <dbReference type="UniProtKB" id="P0A251"/>
    </source>
</evidence>
<evidence type="ECO:0000250" key="2">
    <source>
        <dbReference type="UniProtKB" id="P0AE08"/>
    </source>
</evidence>
<evidence type="ECO:0000250" key="3">
    <source>
        <dbReference type="UniProtKB" id="P56876"/>
    </source>
</evidence>
<evidence type="ECO:0000255" key="4">
    <source>
        <dbReference type="PROSITE-ProRule" id="PRU00691"/>
    </source>
</evidence>
<evidence type="ECO:0000305" key="5"/>
<comment type="function">
    <text evidence="1">Thiol-specific peroxidase that catalyzes the reduction of hydrogen peroxide and organic hydroperoxides to water and alcohols, respectively. Plays a role in cell protection against oxidative stress by detoxifying peroxides.</text>
</comment>
<comment type="catalytic activity">
    <reaction evidence="1">
        <text>a hydroperoxide + NADH + H(+) = an alcohol + NAD(+) + H2O</text>
        <dbReference type="Rhea" id="RHEA:62628"/>
        <dbReference type="ChEBI" id="CHEBI:15377"/>
        <dbReference type="ChEBI" id="CHEBI:15378"/>
        <dbReference type="ChEBI" id="CHEBI:30879"/>
        <dbReference type="ChEBI" id="CHEBI:35924"/>
        <dbReference type="ChEBI" id="CHEBI:57540"/>
        <dbReference type="ChEBI" id="CHEBI:57945"/>
        <dbReference type="EC" id="1.11.1.26"/>
    </reaction>
</comment>
<comment type="subunit">
    <text evidence="1">Homodimer; disulfide-linked, upon oxidation. 5 homodimers assemble to form a ring-like decamer.</text>
</comment>
<comment type="subcellular location">
    <subcellularLocation>
        <location evidence="2">Cytoplasm</location>
    </subcellularLocation>
</comment>
<comment type="miscellaneous">
    <text evidence="3">The active site is a conserved redox-active cysteine residue, the peroxidatic cysteine (C(P)), which makes the nucleophilic attack on the peroxide substrate. The peroxide oxidizes the C(P)-SH to cysteine sulfenic acid (C(P)-SOH), which then reacts with another cysteine residue, the resolving cysteine (C(R)), to form a disulfide bridge. The disulfide is subsequently reduced by an appropriate electron donor to complete the catalytic cycle. In this typical 2-Cys peroxiredoxin, C(R) is provided by the other dimeric subunit to form an intersubunit disulfide. The disulfide is subsequently reduced by thioredoxin.</text>
</comment>
<comment type="similarity">
    <text evidence="5">Belongs to the peroxiredoxin family. AhpC/Prx1 subfamily.</text>
</comment>